<gene>
    <name type="primary">fljM</name>
    <name type="ordered locus">CC_0792</name>
</gene>
<dbReference type="EMBL" id="AF040268">
    <property type="protein sequence ID" value="AAB95380.1"/>
    <property type="molecule type" value="Genomic_DNA"/>
</dbReference>
<dbReference type="EMBL" id="AE005673">
    <property type="protein sequence ID" value="AAK22777.1"/>
    <property type="molecule type" value="Genomic_DNA"/>
</dbReference>
<dbReference type="PIR" id="E87347">
    <property type="entry name" value="E87347"/>
</dbReference>
<dbReference type="RefSeq" id="NP_419609.1">
    <property type="nucleotide sequence ID" value="NC_002696.2"/>
</dbReference>
<dbReference type="RefSeq" id="WP_010918677.1">
    <property type="nucleotide sequence ID" value="NC_002696.2"/>
</dbReference>
<dbReference type="PDB" id="8UXN">
    <property type="method" value="EM"/>
    <property type="resolution" value="2.11 A"/>
    <property type="chains" value="A/B/C/D/E/F/G/H/I/J/K/L/M/N/O/P/Q/R/S/T/U/V/W/X/Y/Z/a/b/c/d=1-273"/>
</dbReference>
<dbReference type="PDB" id="9CEO">
    <property type="method" value="EM"/>
    <property type="resolution" value="2.76 A"/>
    <property type="chains" value="A/B/C/D/E/F/G/H/I/J/K/L/M/N/O/P/Q/R/S/T/U/V/W/X/Y/Z/a/b/c/d=1-273"/>
</dbReference>
<dbReference type="PDBsum" id="8UXN"/>
<dbReference type="PDBsum" id="9CEO"/>
<dbReference type="EMDB" id="EMD-42770"/>
<dbReference type="EMDB" id="EMD-45505"/>
<dbReference type="SMR" id="O52529"/>
<dbReference type="STRING" id="190650.CC_0792"/>
<dbReference type="EnsemblBacteria" id="AAK22777">
    <property type="protein sequence ID" value="AAK22777"/>
    <property type="gene ID" value="CC_0792"/>
</dbReference>
<dbReference type="KEGG" id="ccr:CC_0792"/>
<dbReference type="PATRIC" id="fig|190650.5.peg.804"/>
<dbReference type="eggNOG" id="COG1344">
    <property type="taxonomic scope" value="Bacteria"/>
</dbReference>
<dbReference type="HOGENOM" id="CLU_011142_1_0_5"/>
<dbReference type="BioCyc" id="CAULO:CC0792-MONOMER"/>
<dbReference type="Proteomes" id="UP000001816">
    <property type="component" value="Chromosome"/>
</dbReference>
<dbReference type="GO" id="GO:0009288">
    <property type="term" value="C:bacterial-type flagellum"/>
    <property type="evidence" value="ECO:0007669"/>
    <property type="project" value="UniProtKB-SubCell"/>
</dbReference>
<dbReference type="GO" id="GO:0005576">
    <property type="term" value="C:extracellular region"/>
    <property type="evidence" value="ECO:0007669"/>
    <property type="project" value="UniProtKB-SubCell"/>
</dbReference>
<dbReference type="GO" id="GO:0005198">
    <property type="term" value="F:structural molecule activity"/>
    <property type="evidence" value="ECO:0007669"/>
    <property type="project" value="InterPro"/>
</dbReference>
<dbReference type="Gene3D" id="1.20.1330.10">
    <property type="entry name" value="f41 fragment of flagellin, N-terminal domain"/>
    <property type="match status" value="1"/>
</dbReference>
<dbReference type="InterPro" id="IPR001492">
    <property type="entry name" value="Flagellin"/>
</dbReference>
<dbReference type="InterPro" id="IPR046358">
    <property type="entry name" value="Flagellin_C"/>
</dbReference>
<dbReference type="InterPro" id="IPR001029">
    <property type="entry name" value="Flagellin_N"/>
</dbReference>
<dbReference type="PANTHER" id="PTHR42792">
    <property type="entry name" value="FLAGELLIN"/>
    <property type="match status" value="1"/>
</dbReference>
<dbReference type="PANTHER" id="PTHR42792:SF2">
    <property type="entry name" value="FLAGELLIN"/>
    <property type="match status" value="1"/>
</dbReference>
<dbReference type="Pfam" id="PF00700">
    <property type="entry name" value="Flagellin_C"/>
    <property type="match status" value="1"/>
</dbReference>
<dbReference type="Pfam" id="PF00669">
    <property type="entry name" value="Flagellin_N"/>
    <property type="match status" value="1"/>
</dbReference>
<dbReference type="PRINTS" id="PR00207">
    <property type="entry name" value="FLAGELLIN"/>
</dbReference>
<dbReference type="SUPFAM" id="SSF64518">
    <property type="entry name" value="Phase 1 flagellin"/>
    <property type="match status" value="1"/>
</dbReference>
<sequence length="273" mass="27926">MALNSINTNSGALIALQNLNSTNAELTQVQQRINTGKKIGSAKDNGAIWATAKNQSATAGSMNAVKDSLQRGQSTIDVALAAGDTITDLLGKMKEKALAASDTSLNTASFNALKSDFDSLRDQITKAASNAKFNGVSIADGTTTKLSFLANSDGSAFTVTAKTLTLGGLGLTATSSFTTAAAAKTMIGTIDTALQTATNKLASLGTSSTGLDTHLTFVGKLQDSLDAGVGNLVDADLAKESAKLQSLQTKQQLGVQALSIANQSSSSILSLFR</sequence>
<name>FLJM_CAUVC</name>
<comment type="function">
    <text>Flagellin is the subunit protein which polymerizes to form the filaments of bacterial flagella.</text>
</comment>
<comment type="subunit">
    <text>In C.crescentus, the flagellar filament is composed of multiple flagellins of 29 kDa; 27 kDa and 25 kDa.</text>
</comment>
<comment type="subcellular location">
    <subcellularLocation>
        <location>Secreted</location>
    </subcellularLocation>
    <subcellularLocation>
        <location>Bacterial flagellum</location>
    </subcellularLocation>
</comment>
<comment type="similarity">
    <text evidence="1">Belongs to the bacterial flagellin family.</text>
</comment>
<feature type="chain" id="PRO_0000182603" description="Flagellin FljM">
    <location>
        <begin position="1"/>
        <end position="273"/>
    </location>
</feature>
<evidence type="ECO:0000305" key="1"/>
<proteinExistence type="evidence at protein level"/>
<reference key="1">
    <citation type="journal article" date="2000" name="J. Bacteriol.">
        <title>A family of six flagellin genes contributes to the Caulobacter crescentus flagellar filament.</title>
        <authorList>
            <person name="Ely B."/>
            <person name="Ely T.W."/>
            <person name="Crymes W.B. Jr."/>
            <person name="Minnich S.A."/>
        </authorList>
    </citation>
    <scope>NUCLEOTIDE SEQUENCE [GENOMIC DNA]</scope>
    <source>
        <strain>ATCC 19089 / CIP 103742 / CB 15</strain>
    </source>
</reference>
<reference key="2">
    <citation type="journal article" date="2001" name="Proc. Natl. Acad. Sci. U.S.A.">
        <title>Complete genome sequence of Caulobacter crescentus.</title>
        <authorList>
            <person name="Nierman W.C."/>
            <person name="Feldblyum T.V."/>
            <person name="Laub M.T."/>
            <person name="Paulsen I.T."/>
            <person name="Nelson K.E."/>
            <person name="Eisen J.A."/>
            <person name="Heidelberg J.F."/>
            <person name="Alley M.R.K."/>
            <person name="Ohta N."/>
            <person name="Maddock J.R."/>
            <person name="Potocka I."/>
            <person name="Nelson W.C."/>
            <person name="Newton A."/>
            <person name="Stephens C."/>
            <person name="Phadke N.D."/>
            <person name="Ely B."/>
            <person name="DeBoy R.T."/>
            <person name="Dodson R.J."/>
            <person name="Durkin A.S."/>
            <person name="Gwinn M.L."/>
            <person name="Haft D.H."/>
            <person name="Kolonay J.F."/>
            <person name="Smit J."/>
            <person name="Craven M.B."/>
            <person name="Khouri H.M."/>
            <person name="Shetty J."/>
            <person name="Berry K.J."/>
            <person name="Utterback T.R."/>
            <person name="Tran K."/>
            <person name="Wolf A.M."/>
            <person name="Vamathevan J.J."/>
            <person name="Ermolaeva M.D."/>
            <person name="White O."/>
            <person name="Salzberg S.L."/>
            <person name="Venter J.C."/>
            <person name="Shapiro L."/>
            <person name="Fraser C.M."/>
        </authorList>
    </citation>
    <scope>NUCLEOTIDE SEQUENCE [LARGE SCALE GENOMIC DNA]</scope>
    <source>
        <strain>ATCC 19089 / CIP 103742 / CB 15</strain>
    </source>
</reference>
<organism>
    <name type="scientific">Caulobacter vibrioides (strain ATCC 19089 / CIP 103742 / CB 15)</name>
    <name type="common">Caulobacter crescentus</name>
    <dbReference type="NCBI Taxonomy" id="190650"/>
    <lineage>
        <taxon>Bacteria</taxon>
        <taxon>Pseudomonadati</taxon>
        <taxon>Pseudomonadota</taxon>
        <taxon>Alphaproteobacteria</taxon>
        <taxon>Caulobacterales</taxon>
        <taxon>Caulobacteraceae</taxon>
        <taxon>Caulobacter</taxon>
    </lineage>
</organism>
<accession>O52529</accession>
<keyword id="KW-0002">3D-structure</keyword>
<keyword id="KW-0975">Bacterial flagellum</keyword>
<keyword id="KW-1185">Reference proteome</keyword>
<keyword id="KW-0964">Secreted</keyword>
<protein>
    <recommendedName>
        <fullName>Flagellin FljM</fullName>
    </recommendedName>
</protein>